<evidence type="ECO:0000250" key="1">
    <source>
        <dbReference type="UniProtKB" id="Q01812"/>
    </source>
</evidence>
<evidence type="ECO:0000250" key="2">
    <source>
        <dbReference type="UniProtKB" id="Q8BMF5"/>
    </source>
</evidence>
<evidence type="ECO:0000255" key="3"/>
<evidence type="ECO:0000256" key="4">
    <source>
        <dbReference type="SAM" id="MobiDB-lite"/>
    </source>
</evidence>
<evidence type="ECO:0000269" key="5">
    <source>
    </source>
</evidence>
<evidence type="ECO:0000305" key="6"/>
<evidence type="ECO:0000305" key="7">
    <source>
    </source>
</evidence>
<dbReference type="EMBL" id="S67803">
    <property type="protein sequence ID" value="AAB29311.1"/>
    <property type="molecule type" value="mRNA"/>
</dbReference>
<dbReference type="EMBL" id="AK292726">
    <property type="protein sequence ID" value="BAF85415.1"/>
    <property type="molecule type" value="mRNA"/>
</dbReference>
<dbReference type="EMBL" id="CH471065">
    <property type="protein sequence ID" value="EAW67512.1"/>
    <property type="molecule type" value="Genomic_DNA"/>
</dbReference>
<dbReference type="CCDS" id="CCDS8433.1"/>
<dbReference type="PIR" id="JH0826">
    <property type="entry name" value="JH0826"/>
</dbReference>
<dbReference type="RefSeq" id="NP_001269399.1">
    <property type="nucleotide sequence ID" value="NM_001282470.3"/>
</dbReference>
<dbReference type="RefSeq" id="NP_055434.2">
    <property type="nucleotide sequence ID" value="NM_014619.4"/>
</dbReference>
<dbReference type="SMR" id="Q16099"/>
<dbReference type="BioGRID" id="109157">
    <property type="interactions" value="8"/>
</dbReference>
<dbReference type="ComplexPortal" id="CPX-8629">
    <property type="entry name" value="GLUK1-GLUK4 glutamate ionotropic kainate-type receptor complex"/>
</dbReference>
<dbReference type="ComplexPortal" id="CPX-8630">
    <property type="entry name" value="GLUK2-GLUK4 glutamate ionotropic kainate-type receptor complex"/>
</dbReference>
<dbReference type="ComplexPortal" id="CPX-8631">
    <property type="entry name" value="GLUK3-GLUK4 glutamate ionotropic kainate-type receptor complex"/>
</dbReference>
<dbReference type="ComplexPortal" id="CPX-8632">
    <property type="entry name" value="GLUK1-GLUK2-GLUK4 glutamate ionotropic kainate-type receptor complex"/>
</dbReference>
<dbReference type="ComplexPortal" id="CPX-8633">
    <property type="entry name" value="GLUK1-GLUK3-GLUK4 glutamate ionotropic kainate-type receptor complex"/>
</dbReference>
<dbReference type="ComplexPortal" id="CPX-8634">
    <property type="entry name" value="GLUK1-GLUK2-GLUK3-GLUK4 glutamate ionotropic kainate-type receptor complex"/>
</dbReference>
<dbReference type="CORUM" id="Q16099"/>
<dbReference type="FunCoup" id="Q16099">
    <property type="interactions" value="473"/>
</dbReference>
<dbReference type="STRING" id="9606.ENSP00000435648"/>
<dbReference type="BindingDB" id="Q16099"/>
<dbReference type="ChEMBL" id="CHEMBL2109241"/>
<dbReference type="DrugBank" id="DB00237">
    <property type="generic name" value="Butabarbital"/>
</dbReference>
<dbReference type="DrugBank" id="DB00142">
    <property type="generic name" value="Glutamic acid"/>
</dbReference>
<dbReference type="DrugBank" id="DB00273">
    <property type="generic name" value="Topiramate"/>
</dbReference>
<dbReference type="DrugCentral" id="Q16099"/>
<dbReference type="TCDB" id="1.A.10.1.9">
    <property type="family name" value="the glutamate-gated ion channel (gic) family of neurotransmitter receptors"/>
</dbReference>
<dbReference type="GlyCosmos" id="Q16099">
    <property type="glycosylation" value="9 sites, No reported glycans"/>
</dbReference>
<dbReference type="GlyGen" id="Q16099">
    <property type="glycosylation" value="9 sites"/>
</dbReference>
<dbReference type="iPTMnet" id="Q16099"/>
<dbReference type="PhosphoSitePlus" id="Q16099"/>
<dbReference type="BioMuta" id="GRIK4"/>
<dbReference type="DMDM" id="209572625"/>
<dbReference type="MassIVE" id="Q16099"/>
<dbReference type="PaxDb" id="9606-ENSP00000435648"/>
<dbReference type="PeptideAtlas" id="Q16099"/>
<dbReference type="ProteomicsDB" id="60831"/>
<dbReference type="Antibodypedia" id="32769">
    <property type="antibodies" value="160 antibodies from 29 providers"/>
</dbReference>
<dbReference type="DNASU" id="2900"/>
<dbReference type="Ensembl" id="ENST00000438375.2">
    <property type="protein sequence ID" value="ENSP00000404063.2"/>
    <property type="gene ID" value="ENSG00000149403.13"/>
</dbReference>
<dbReference type="Ensembl" id="ENST00000527524.8">
    <property type="protein sequence ID" value="ENSP00000435648.2"/>
    <property type="gene ID" value="ENSG00000149403.13"/>
</dbReference>
<dbReference type="Ensembl" id="ENST00000638419.1">
    <property type="protein sequence ID" value="ENSP00000492086.1"/>
    <property type="gene ID" value="ENSG00000149403.13"/>
</dbReference>
<dbReference type="GeneID" id="2900"/>
<dbReference type="KEGG" id="hsa:2900"/>
<dbReference type="MANE-Select" id="ENST00000527524.8">
    <property type="protein sequence ID" value="ENSP00000435648.2"/>
    <property type="RefSeq nucleotide sequence ID" value="NM_014619.5"/>
    <property type="RefSeq protein sequence ID" value="NP_055434.2"/>
</dbReference>
<dbReference type="UCSC" id="uc001pxn.4">
    <property type="organism name" value="human"/>
</dbReference>
<dbReference type="AGR" id="HGNC:4582"/>
<dbReference type="CTD" id="2900"/>
<dbReference type="DisGeNET" id="2900"/>
<dbReference type="GeneCards" id="GRIK4"/>
<dbReference type="HGNC" id="HGNC:4582">
    <property type="gene designation" value="GRIK4"/>
</dbReference>
<dbReference type="HPA" id="ENSG00000149403">
    <property type="expression patterns" value="Tissue enhanced (brain)"/>
</dbReference>
<dbReference type="MalaCards" id="GRIK4"/>
<dbReference type="MIM" id="600282">
    <property type="type" value="gene"/>
</dbReference>
<dbReference type="neXtProt" id="NX_Q16099"/>
<dbReference type="OpenTargets" id="ENSG00000149403"/>
<dbReference type="PharmGKB" id="PA28976"/>
<dbReference type="VEuPathDB" id="HostDB:ENSG00000149403"/>
<dbReference type="eggNOG" id="KOG1052">
    <property type="taxonomic scope" value="Eukaryota"/>
</dbReference>
<dbReference type="GeneTree" id="ENSGT00940000159111"/>
<dbReference type="HOGENOM" id="CLU_007257_1_0_1"/>
<dbReference type="InParanoid" id="Q16099"/>
<dbReference type="OMA" id="LVWLMKI"/>
<dbReference type="OrthoDB" id="5984008at2759"/>
<dbReference type="PAN-GO" id="Q16099">
    <property type="GO annotations" value="8 GO annotations based on evolutionary models"/>
</dbReference>
<dbReference type="PhylomeDB" id="Q16099"/>
<dbReference type="TreeFam" id="TF334668"/>
<dbReference type="PathwayCommons" id="Q16099"/>
<dbReference type="Reactome" id="R-HSA-451308">
    <property type="pathway name" value="Activation of Ca-permeable Kainate Receptor"/>
</dbReference>
<dbReference type="SignaLink" id="Q16099"/>
<dbReference type="SIGNOR" id="Q16099"/>
<dbReference type="BioGRID-ORCS" id="2900">
    <property type="hits" value="10 hits in 1154 CRISPR screens"/>
</dbReference>
<dbReference type="ChiTaRS" id="GRIK4">
    <property type="organism name" value="human"/>
</dbReference>
<dbReference type="GenomeRNAi" id="2900"/>
<dbReference type="Pharos" id="Q16099">
    <property type="development level" value="Tclin"/>
</dbReference>
<dbReference type="PRO" id="PR:Q16099"/>
<dbReference type="Proteomes" id="UP000005640">
    <property type="component" value="Chromosome 11"/>
</dbReference>
<dbReference type="RNAct" id="Q16099">
    <property type="molecule type" value="protein"/>
</dbReference>
<dbReference type="Bgee" id="ENSG00000149403">
    <property type="expression patterns" value="Expressed in secondary oocyte and 107 other cell types or tissues"/>
</dbReference>
<dbReference type="GO" id="GO:0042995">
    <property type="term" value="C:cell projection"/>
    <property type="evidence" value="ECO:0007669"/>
    <property type="project" value="UniProtKB-KW"/>
</dbReference>
<dbReference type="GO" id="GO:0098686">
    <property type="term" value="C:hippocampal mossy fiber to CA3 synapse"/>
    <property type="evidence" value="ECO:0007669"/>
    <property type="project" value="Ensembl"/>
</dbReference>
<dbReference type="GO" id="GO:0032983">
    <property type="term" value="C:kainate selective glutamate receptor complex"/>
    <property type="evidence" value="ECO:0000318"/>
    <property type="project" value="GO_Central"/>
</dbReference>
<dbReference type="GO" id="GO:0005886">
    <property type="term" value="C:plasma membrane"/>
    <property type="evidence" value="ECO:0000318"/>
    <property type="project" value="GO_Central"/>
</dbReference>
<dbReference type="GO" id="GO:0098839">
    <property type="term" value="C:postsynaptic density membrane"/>
    <property type="evidence" value="ECO:0000318"/>
    <property type="project" value="GO_Central"/>
</dbReference>
<dbReference type="GO" id="GO:0042734">
    <property type="term" value="C:presynaptic membrane"/>
    <property type="evidence" value="ECO:0000318"/>
    <property type="project" value="GO_Central"/>
</dbReference>
<dbReference type="GO" id="GO:0015277">
    <property type="term" value="F:kainate selective glutamate receptor activity"/>
    <property type="evidence" value="ECO:0000318"/>
    <property type="project" value="GO_Central"/>
</dbReference>
<dbReference type="GO" id="GO:0099507">
    <property type="term" value="F:ligand-gated monoatomic ion channel activity involved in regulation of presynaptic membrane potential"/>
    <property type="evidence" value="ECO:0000314"/>
    <property type="project" value="SynGO"/>
</dbReference>
<dbReference type="GO" id="GO:1904315">
    <property type="term" value="F:transmitter-gated monoatomic ion channel activity involved in regulation of postsynaptic membrane potential"/>
    <property type="evidence" value="ECO:0000318"/>
    <property type="project" value="GO_Central"/>
</dbReference>
<dbReference type="GO" id="GO:0007268">
    <property type="term" value="P:chemical synaptic transmission"/>
    <property type="evidence" value="ECO:0000304"/>
    <property type="project" value="ProtInc"/>
</dbReference>
<dbReference type="GO" id="GO:0007215">
    <property type="term" value="P:glutamate receptor signaling pathway"/>
    <property type="evidence" value="ECO:0000304"/>
    <property type="project" value="ProtInc"/>
</dbReference>
<dbReference type="GO" id="GO:0050804">
    <property type="term" value="P:modulation of chemical synaptic transmission"/>
    <property type="evidence" value="ECO:0000318"/>
    <property type="project" value="GO_Central"/>
</dbReference>
<dbReference type="GO" id="GO:0035249">
    <property type="term" value="P:synaptic transmission, glutamatergic"/>
    <property type="evidence" value="ECO:0000318"/>
    <property type="project" value="GO_Central"/>
</dbReference>
<dbReference type="CDD" id="cd06394">
    <property type="entry name" value="PBP1_iGluR_Kainate_KA1_2"/>
    <property type="match status" value="1"/>
</dbReference>
<dbReference type="CDD" id="cd13724">
    <property type="entry name" value="PBP2_iGluR_kainate_KA1"/>
    <property type="match status" value="1"/>
</dbReference>
<dbReference type="FunFam" id="3.40.190.10:FF:000060">
    <property type="entry name" value="Glutamate receptor ionotropic, kainate 1"/>
    <property type="match status" value="1"/>
</dbReference>
<dbReference type="FunFam" id="3.40.190.10:FF:000072">
    <property type="entry name" value="glutamate receptor ionotropic, kainate 4"/>
    <property type="match status" value="1"/>
</dbReference>
<dbReference type="FunFam" id="3.40.50.2300:FF:000059">
    <property type="entry name" value="Glutamate receptor, ionotropic, kainate 4"/>
    <property type="match status" value="1"/>
</dbReference>
<dbReference type="FunFam" id="1.10.287.70:FF:000010">
    <property type="entry name" value="Putative glutamate receptor ionotropic kainate 1"/>
    <property type="match status" value="1"/>
</dbReference>
<dbReference type="Gene3D" id="3.40.50.2300">
    <property type="match status" value="2"/>
</dbReference>
<dbReference type="Gene3D" id="3.40.190.10">
    <property type="entry name" value="Periplasmic binding protein-like II"/>
    <property type="match status" value="3"/>
</dbReference>
<dbReference type="InterPro" id="IPR001828">
    <property type="entry name" value="ANF_lig-bd_rcpt"/>
</dbReference>
<dbReference type="InterPro" id="IPR019594">
    <property type="entry name" value="Glu/Gly-bd"/>
</dbReference>
<dbReference type="InterPro" id="IPR001508">
    <property type="entry name" value="Iono_Glu_rcpt_met"/>
</dbReference>
<dbReference type="InterPro" id="IPR015683">
    <property type="entry name" value="Ionotropic_Glu_rcpt"/>
</dbReference>
<dbReference type="InterPro" id="IPR001320">
    <property type="entry name" value="Iontro_rcpt_C"/>
</dbReference>
<dbReference type="InterPro" id="IPR028082">
    <property type="entry name" value="Peripla_BP_I"/>
</dbReference>
<dbReference type="PANTHER" id="PTHR18966">
    <property type="entry name" value="IONOTROPIC GLUTAMATE RECEPTOR"/>
    <property type="match status" value="1"/>
</dbReference>
<dbReference type="Pfam" id="PF01094">
    <property type="entry name" value="ANF_receptor"/>
    <property type="match status" value="1"/>
</dbReference>
<dbReference type="Pfam" id="PF00060">
    <property type="entry name" value="Lig_chan"/>
    <property type="match status" value="1"/>
</dbReference>
<dbReference type="Pfam" id="PF10613">
    <property type="entry name" value="Lig_chan-Glu_bd"/>
    <property type="match status" value="1"/>
</dbReference>
<dbReference type="PRINTS" id="PR00177">
    <property type="entry name" value="NMDARECEPTOR"/>
</dbReference>
<dbReference type="SMART" id="SM00918">
    <property type="entry name" value="Lig_chan-Glu_bd"/>
    <property type="match status" value="1"/>
</dbReference>
<dbReference type="SMART" id="SM00079">
    <property type="entry name" value="PBPe"/>
    <property type="match status" value="1"/>
</dbReference>
<dbReference type="SUPFAM" id="SSF53822">
    <property type="entry name" value="Periplasmic binding protein-like I"/>
    <property type="match status" value="1"/>
</dbReference>
<dbReference type="SUPFAM" id="SSF53850">
    <property type="entry name" value="Periplasmic binding protein-like II"/>
    <property type="match status" value="1"/>
</dbReference>
<keyword id="KW-1003">Cell membrane</keyword>
<keyword id="KW-0966">Cell projection</keyword>
<keyword id="KW-0325">Glycoprotein</keyword>
<keyword id="KW-0407">Ion channel</keyword>
<keyword id="KW-0406">Ion transport</keyword>
<keyword id="KW-1071">Ligand-gated ion channel</keyword>
<keyword id="KW-0472">Membrane</keyword>
<keyword id="KW-0628">Postsynaptic cell membrane</keyword>
<keyword id="KW-1267">Proteomics identification</keyword>
<keyword id="KW-0675">Receptor</keyword>
<keyword id="KW-1185">Reference proteome</keyword>
<keyword id="KW-0732">Signal</keyword>
<keyword id="KW-0770">Synapse</keyword>
<keyword id="KW-0812">Transmembrane</keyword>
<keyword id="KW-1133">Transmembrane helix</keyword>
<keyword id="KW-0813">Transport</keyword>
<protein>
    <recommendedName>
        <fullName>Glutamate receptor ionotropic, kainate 4</fullName>
        <shortName>GluK4</shortName>
    </recommendedName>
    <alternativeName>
        <fullName>Excitatory amino acid receptor 1</fullName>
        <shortName>EAA1</shortName>
    </alternativeName>
    <alternativeName>
        <fullName>Glutamate receptor KA-1</fullName>
        <shortName>KA1</shortName>
    </alternativeName>
</protein>
<sequence>MPRVSAPLVLLPAWLVMVACSPHSLRIAAILDDPMECSRGERLSITLAKNRINRAPERLGKAKVEVDIFELLRDSEYETAETMCQILPKGVVAVLGPSSSPASSSIISNICGEKEVPHFKVAPEEFVKFQFQRFTTLNLHPSNTDISVAVAGILNFFNCTTACLICAKAECLLNLEKLLRQFLISKDTLSVRMLDDTRDPTPLLKEIRDDKTATIIIHANASMSHTILLKAAELGMVSAYYTYIFTNLEFSLQRMDSLVDDRVNILGFSIFNQSHAFFQEFAQSLNQSWQENCDHVPFTGPALSSALLFDAVYAVVTAVQELNRSQEIGVKPLSCGSAQIWQHGTSLMNYLRMVELEGLTGHIEFNSKGQRSNYALKILQFTRNGFRQIGQWHVAEGLSMDSHLYASNISDTLFNTTLVVTTILENPYLMLKGNHQEMEGNDRYEGFCVDMLKELAEILRFNYKIRLVGDGVYGVPEANGTWTGMVGELIARKADLAVAGLTITAEREKVIDFSKPFMTLGISILYRVHMGRKPGYFSFLDPFSPGVWLFMLLAYLAVSCVLFLVARLTPYEWYSPHPCAQGRCNLLVNQYSLGNSLWFPVGGFMQQGSTIAPRALSTRCVSGVWWAFTLIIISSYTANLAAFLTVQRMDVPIESVDDLADQTAIEYGTIHGGSSMTFFQNSRYQTYQRMWNYMYSKQPSVFVKSTEEGIARVLNSNYAFLLESTMNEYYRQRNCNLTQIGGLLDTKGYGIGMPVGSVFRDEFDLAILQLQENNRLEILKRKWWEGGKCPKEEDHRAKGLGMENIGGIFVVLICGLIVAIFMAMLEFLWTLRHSEATEVSVCQEMVTELRSIILCQDSIHPRRRRAAVPPPRPPIPEERRPRGTATLSNGKLCGAGEPDQLAQRLAQEAALVARGCTHIRVCPECRRFQGLRARPSPARSEESLEWEKTTNSSEPE</sequence>
<organism>
    <name type="scientific">Homo sapiens</name>
    <name type="common">Human</name>
    <dbReference type="NCBI Taxonomy" id="9606"/>
    <lineage>
        <taxon>Eukaryota</taxon>
        <taxon>Metazoa</taxon>
        <taxon>Chordata</taxon>
        <taxon>Craniata</taxon>
        <taxon>Vertebrata</taxon>
        <taxon>Euteleostomi</taxon>
        <taxon>Mammalia</taxon>
        <taxon>Eutheria</taxon>
        <taxon>Euarchontoglires</taxon>
        <taxon>Primates</taxon>
        <taxon>Haplorrhini</taxon>
        <taxon>Catarrhini</taxon>
        <taxon>Hominidae</taxon>
        <taxon>Homo</taxon>
    </lineage>
</organism>
<proteinExistence type="evidence at protein level"/>
<reference key="1">
    <citation type="journal article" date="1994" name="J. Neurochem.">
        <title>Molecular cloning, expression, and pharmacological characterization of humEAA1, a human kainate receptor subunit.</title>
        <authorList>
            <person name="Kamboj R.K."/>
            <person name="Schoepp D.D."/>
            <person name="Nutt S."/>
            <person name="Shekter L."/>
            <person name="Korczak B."/>
            <person name="True R.A."/>
            <person name="Rampersad V."/>
            <person name="Zimmerman D.M."/>
            <person name="Wosnick M.A."/>
        </authorList>
    </citation>
    <scope>NUCLEOTIDE SEQUENCE [MRNA]</scope>
    <scope>VARIANT ILE-528</scope>
    <scope>FUNCTION</scope>
    <scope>SUBCELLULAR LOCATION</scope>
    <source>
        <tissue>Hippocampus</tissue>
    </source>
</reference>
<reference key="2">
    <citation type="journal article" date="2004" name="Nat. Genet.">
        <title>Complete sequencing and characterization of 21,243 full-length human cDNAs.</title>
        <authorList>
            <person name="Ota T."/>
            <person name="Suzuki Y."/>
            <person name="Nishikawa T."/>
            <person name="Otsuki T."/>
            <person name="Sugiyama T."/>
            <person name="Irie R."/>
            <person name="Wakamatsu A."/>
            <person name="Hayashi K."/>
            <person name="Sato H."/>
            <person name="Nagai K."/>
            <person name="Kimura K."/>
            <person name="Makita H."/>
            <person name="Sekine M."/>
            <person name="Obayashi M."/>
            <person name="Nishi T."/>
            <person name="Shibahara T."/>
            <person name="Tanaka T."/>
            <person name="Ishii S."/>
            <person name="Yamamoto J."/>
            <person name="Saito K."/>
            <person name="Kawai Y."/>
            <person name="Isono Y."/>
            <person name="Nakamura Y."/>
            <person name="Nagahari K."/>
            <person name="Murakami K."/>
            <person name="Yasuda T."/>
            <person name="Iwayanagi T."/>
            <person name="Wagatsuma M."/>
            <person name="Shiratori A."/>
            <person name="Sudo H."/>
            <person name="Hosoiri T."/>
            <person name="Kaku Y."/>
            <person name="Kodaira H."/>
            <person name="Kondo H."/>
            <person name="Sugawara M."/>
            <person name="Takahashi M."/>
            <person name="Kanda K."/>
            <person name="Yokoi T."/>
            <person name="Furuya T."/>
            <person name="Kikkawa E."/>
            <person name="Omura Y."/>
            <person name="Abe K."/>
            <person name="Kamihara K."/>
            <person name="Katsuta N."/>
            <person name="Sato K."/>
            <person name="Tanikawa M."/>
            <person name="Yamazaki M."/>
            <person name="Ninomiya K."/>
            <person name="Ishibashi T."/>
            <person name="Yamashita H."/>
            <person name="Murakawa K."/>
            <person name="Fujimori K."/>
            <person name="Tanai H."/>
            <person name="Kimata M."/>
            <person name="Watanabe M."/>
            <person name="Hiraoka S."/>
            <person name="Chiba Y."/>
            <person name="Ishida S."/>
            <person name="Ono Y."/>
            <person name="Takiguchi S."/>
            <person name="Watanabe S."/>
            <person name="Yosida M."/>
            <person name="Hotuta T."/>
            <person name="Kusano J."/>
            <person name="Kanehori K."/>
            <person name="Takahashi-Fujii A."/>
            <person name="Hara H."/>
            <person name="Tanase T.-O."/>
            <person name="Nomura Y."/>
            <person name="Togiya S."/>
            <person name="Komai F."/>
            <person name="Hara R."/>
            <person name="Takeuchi K."/>
            <person name="Arita M."/>
            <person name="Imose N."/>
            <person name="Musashino K."/>
            <person name="Yuuki H."/>
            <person name="Oshima A."/>
            <person name="Sasaki N."/>
            <person name="Aotsuka S."/>
            <person name="Yoshikawa Y."/>
            <person name="Matsunawa H."/>
            <person name="Ichihara T."/>
            <person name="Shiohata N."/>
            <person name="Sano S."/>
            <person name="Moriya S."/>
            <person name="Momiyama H."/>
            <person name="Satoh N."/>
            <person name="Takami S."/>
            <person name="Terashima Y."/>
            <person name="Suzuki O."/>
            <person name="Nakagawa S."/>
            <person name="Senoh A."/>
            <person name="Mizoguchi H."/>
            <person name="Goto Y."/>
            <person name="Shimizu F."/>
            <person name="Wakebe H."/>
            <person name="Hishigaki H."/>
            <person name="Watanabe T."/>
            <person name="Sugiyama A."/>
            <person name="Takemoto M."/>
            <person name="Kawakami B."/>
            <person name="Yamazaki M."/>
            <person name="Watanabe K."/>
            <person name="Kumagai A."/>
            <person name="Itakura S."/>
            <person name="Fukuzumi Y."/>
            <person name="Fujimori Y."/>
            <person name="Komiyama M."/>
            <person name="Tashiro H."/>
            <person name="Tanigami A."/>
            <person name="Fujiwara T."/>
            <person name="Ono T."/>
            <person name="Yamada K."/>
            <person name="Fujii Y."/>
            <person name="Ozaki K."/>
            <person name="Hirao M."/>
            <person name="Ohmori Y."/>
            <person name="Kawabata A."/>
            <person name="Hikiji T."/>
            <person name="Kobatake N."/>
            <person name="Inagaki H."/>
            <person name="Ikema Y."/>
            <person name="Okamoto S."/>
            <person name="Okitani R."/>
            <person name="Kawakami T."/>
            <person name="Noguchi S."/>
            <person name="Itoh T."/>
            <person name="Shigeta K."/>
            <person name="Senba T."/>
            <person name="Matsumura K."/>
            <person name="Nakajima Y."/>
            <person name="Mizuno T."/>
            <person name="Morinaga M."/>
            <person name="Sasaki M."/>
            <person name="Togashi T."/>
            <person name="Oyama M."/>
            <person name="Hata H."/>
            <person name="Watanabe M."/>
            <person name="Komatsu T."/>
            <person name="Mizushima-Sugano J."/>
            <person name="Satoh T."/>
            <person name="Shirai Y."/>
            <person name="Takahashi Y."/>
            <person name="Nakagawa K."/>
            <person name="Okumura K."/>
            <person name="Nagase T."/>
            <person name="Nomura N."/>
            <person name="Kikuchi H."/>
            <person name="Masuho Y."/>
            <person name="Yamashita R."/>
            <person name="Nakai K."/>
            <person name="Yada T."/>
            <person name="Nakamura Y."/>
            <person name="Ohara O."/>
            <person name="Isogai T."/>
            <person name="Sugano S."/>
        </authorList>
    </citation>
    <scope>NUCLEOTIDE SEQUENCE [LARGE SCALE MRNA]</scope>
    <source>
        <tissue>Kidney</tissue>
    </source>
</reference>
<reference key="3">
    <citation type="submission" date="2005-07" db="EMBL/GenBank/DDBJ databases">
        <authorList>
            <person name="Mural R.J."/>
            <person name="Istrail S."/>
            <person name="Sutton G.G."/>
            <person name="Florea L."/>
            <person name="Halpern A.L."/>
            <person name="Mobarry C.M."/>
            <person name="Lippert R."/>
            <person name="Walenz B."/>
            <person name="Shatkay H."/>
            <person name="Dew I."/>
            <person name="Miller J.R."/>
            <person name="Flanigan M.J."/>
            <person name="Edwards N.J."/>
            <person name="Bolanos R."/>
            <person name="Fasulo D."/>
            <person name="Halldorsson B.V."/>
            <person name="Hannenhalli S."/>
            <person name="Turner R."/>
            <person name="Yooseph S."/>
            <person name="Lu F."/>
            <person name="Nusskern D.R."/>
            <person name="Shue B.C."/>
            <person name="Zheng X.H."/>
            <person name="Zhong F."/>
            <person name="Delcher A.L."/>
            <person name="Huson D.H."/>
            <person name="Kravitz S.A."/>
            <person name="Mouchard L."/>
            <person name="Reinert K."/>
            <person name="Remington K.A."/>
            <person name="Clark A.G."/>
            <person name="Waterman M.S."/>
            <person name="Eichler E.E."/>
            <person name="Adams M.D."/>
            <person name="Hunkapiller M.W."/>
            <person name="Myers E.W."/>
            <person name="Venter J.C."/>
        </authorList>
    </citation>
    <scope>NUCLEOTIDE SEQUENCE [LARGE SCALE GENOMIC DNA]</scope>
</reference>
<feature type="signal peptide" evidence="3">
    <location>
        <begin position="1"/>
        <end position="20"/>
    </location>
</feature>
<feature type="chain" id="PRO_0000011549" description="Glutamate receptor ionotropic, kainate 4">
    <location>
        <begin position="21"/>
        <end position="956"/>
    </location>
</feature>
<feature type="topological domain" description="Extracellular" evidence="3">
    <location>
        <begin position="21"/>
        <end position="545"/>
    </location>
</feature>
<feature type="transmembrane region" description="Helical" evidence="3">
    <location>
        <begin position="546"/>
        <end position="566"/>
    </location>
</feature>
<feature type="topological domain" description="Cytoplasmic" evidence="3">
    <location>
        <begin position="567"/>
        <end position="623"/>
    </location>
</feature>
<feature type="transmembrane region" description="Helical" evidence="3">
    <location>
        <begin position="624"/>
        <end position="644"/>
    </location>
</feature>
<feature type="topological domain" description="Extracellular" evidence="3">
    <location>
        <begin position="645"/>
        <end position="804"/>
    </location>
</feature>
<feature type="transmembrane region" description="Helical" evidence="3">
    <location>
        <begin position="805"/>
        <end position="825"/>
    </location>
</feature>
<feature type="topological domain" description="Cytoplasmic" evidence="3">
    <location>
        <begin position="826"/>
        <end position="956"/>
    </location>
</feature>
<feature type="region of interest" description="Disordered" evidence="4">
    <location>
        <begin position="863"/>
        <end position="889"/>
    </location>
</feature>
<feature type="region of interest" description="Disordered" evidence="4">
    <location>
        <begin position="931"/>
        <end position="956"/>
    </location>
</feature>
<feature type="compositionally biased region" description="Basic and acidic residues" evidence="4">
    <location>
        <begin position="939"/>
        <end position="948"/>
    </location>
</feature>
<feature type="binding site" evidence="1">
    <location>
        <position position="500"/>
    </location>
    <ligand>
        <name>L-glutamate</name>
        <dbReference type="ChEBI" id="CHEBI:29985"/>
    </ligand>
</feature>
<feature type="binding site" evidence="1">
    <location>
        <position position="502"/>
    </location>
    <ligand>
        <name>L-glutamate</name>
        <dbReference type="ChEBI" id="CHEBI:29985"/>
    </ligand>
</feature>
<feature type="binding site" evidence="1">
    <location>
        <position position="507"/>
    </location>
    <ligand>
        <name>L-glutamate</name>
        <dbReference type="ChEBI" id="CHEBI:29985"/>
    </ligand>
</feature>
<feature type="binding site" evidence="1">
    <location>
        <position position="674"/>
    </location>
    <ligand>
        <name>L-glutamate</name>
        <dbReference type="ChEBI" id="CHEBI:29985"/>
    </ligand>
</feature>
<feature type="binding site" evidence="1">
    <location>
        <position position="675"/>
    </location>
    <ligand>
        <name>L-glutamate</name>
        <dbReference type="ChEBI" id="CHEBI:29985"/>
    </ligand>
</feature>
<feature type="binding site" evidence="1">
    <location>
        <position position="723"/>
    </location>
    <ligand>
        <name>L-glutamate</name>
        <dbReference type="ChEBI" id="CHEBI:29985"/>
    </ligand>
</feature>
<feature type="glycosylation site" description="N-linked (GlcNAc...) asparagine" evidence="3">
    <location>
        <position position="158"/>
    </location>
</feature>
<feature type="glycosylation site" description="N-linked (GlcNAc...) asparagine" evidence="3">
    <location>
        <position position="220"/>
    </location>
</feature>
<feature type="glycosylation site" description="N-linked (GlcNAc...) asparagine" evidence="3">
    <location>
        <position position="272"/>
    </location>
</feature>
<feature type="glycosylation site" description="N-linked (GlcNAc...) asparagine" evidence="3">
    <location>
        <position position="286"/>
    </location>
</feature>
<feature type="glycosylation site" description="N-linked (GlcNAc...) asparagine" evidence="3">
    <location>
        <position position="323"/>
    </location>
</feature>
<feature type="glycosylation site" description="N-linked (GlcNAc...) asparagine" evidence="3">
    <location>
        <position position="408"/>
    </location>
</feature>
<feature type="glycosylation site" description="N-linked (GlcNAc...) asparagine" evidence="3">
    <location>
        <position position="415"/>
    </location>
</feature>
<feature type="glycosylation site" description="N-linked (GlcNAc...) asparagine" evidence="3">
    <location>
        <position position="479"/>
    </location>
</feature>
<feature type="glycosylation site" description="N-linked (GlcNAc...) asparagine" evidence="3">
    <location>
        <position position="736"/>
    </location>
</feature>
<feature type="sequence variant" id="VAR_046998" description="In dbSNP:rs2230298." evidence="5">
    <original>V</original>
    <variation>I</variation>
    <location>
        <position position="528"/>
    </location>
</feature>
<feature type="sequence variant" id="VAR_046999" description="In dbSNP:rs9988907.">
    <original>M</original>
    <variation>T</variation>
    <location>
        <position position="824"/>
    </location>
</feature>
<feature type="sequence conflict" description="In Ref. 1; AAB29311." evidence="6" ref="1">
    <original>M</original>
    <variation>T</variation>
    <location>
        <position position="255"/>
    </location>
</feature>
<accession>Q16099</accession>
<accession>A8K9L1</accession>
<gene>
    <name type="primary">GRIK4</name>
    <name type="synonym">GRIK</name>
</gene>
<comment type="function">
    <text evidence="1 5">Ionotropic glutamate receptor that functions as a cation-permeable ligand-gated ion channel. Cannot form functional channels on its own (PubMed:8263508). Shows channel activity only in heteromeric assembly with GRIK1, GRIK2 and GRIK3 subunits (By similarity).</text>
</comment>
<comment type="subunit">
    <text evidence="1">Homodimer. Can form functional heteromeric receptors with GRIK1, GRIK2 and GRIK3.</text>
</comment>
<comment type="subcellular location">
    <subcellularLocation>
        <location evidence="7">Cell membrane</location>
        <topology evidence="3">Multi-pass membrane protein</topology>
    </subcellularLocation>
    <subcellularLocation>
        <location evidence="2">Postsynaptic cell membrane</location>
        <topology evidence="3">Multi-pass membrane protein</topology>
    </subcellularLocation>
    <subcellularLocation>
        <location evidence="2">Presynaptic cell membrane</location>
        <topology evidence="3">Multi-pass membrane protein</topology>
    </subcellularLocation>
</comment>
<comment type="similarity">
    <text evidence="6">Belongs to the glutamate-gated ion channel (TC 1.A.10.1) family. GRIK4 subfamily.</text>
</comment>
<name>GRIK4_HUMAN</name>